<gene>
    <name evidence="1" type="primary">aspS</name>
    <name type="ordered locus">Mmc1_0942</name>
</gene>
<organism>
    <name type="scientific">Magnetococcus marinus (strain ATCC BAA-1437 / JCM 17883 / MC-1)</name>
    <dbReference type="NCBI Taxonomy" id="156889"/>
    <lineage>
        <taxon>Bacteria</taxon>
        <taxon>Pseudomonadati</taxon>
        <taxon>Pseudomonadota</taxon>
        <taxon>Alphaproteobacteria</taxon>
        <taxon>Magnetococcales</taxon>
        <taxon>Magnetococcaceae</taxon>
        <taxon>Magnetococcus</taxon>
    </lineage>
</organism>
<accession>A0L667</accession>
<sequence>MKRTHYCNDVRESQIGETVVLEGWINRRRDHGGVIFVDLRDRTGLVQVVFSPELFAEPHAQAHTLRSEYVIRATGKVTARSEGTINPNMDTGRIEVVVEDLTILNSSLPLPFQLDDEISENLRLQYRFLDLRRPDMQRNLMFRHRIMQSVRKHLDGSGFVEVETPMLTRSTPEGARDYLVPSRVNPGDFYALPQSPQLFKQLLMMAGYDRYFQIVRCFRDEDLRADRQPEFTQIDLEMSFVEPNDVMELTESVVVEAFKEALGVSIPQPVRRITYAEAMDKYGLDAPDMRITMELKDLTEVMKSSEFKVFRQAATLEGRGNEHGLVKVLKVPGGGSLTRKQIDTYTEFVGIYGAKGLAYIKVNGPWQEDGWQSPIVKFLGDAEKQAIQEATQAQVGDLLFFGADKASVVNESLGRLRVKLGKELEMLCDEKFAFVWVTDFPLLDWDNEARRNTAVHHPFTAPHPDDIIYLENADGASVEHPLEKVRSLAYDLVLNGTEVGGGSIRIHDTMLQRRMLELLEIGEEEAEGKFGFLLRALQYGAPPHGGLALGLDRLVTLMLGLDSIRDVIAFPKTQKATCLMTEAPSKVDGAQLKELHLRSTFKPKTAE</sequence>
<protein>
    <recommendedName>
        <fullName evidence="1">Aspartate--tRNA(Asp/Asn) ligase</fullName>
        <ecNumber evidence="1">6.1.1.23</ecNumber>
    </recommendedName>
    <alternativeName>
        <fullName evidence="1">Aspartyl-tRNA synthetase</fullName>
        <shortName evidence="1">AspRS</shortName>
    </alternativeName>
    <alternativeName>
        <fullName evidence="1">Non-discriminating aspartyl-tRNA synthetase</fullName>
        <shortName evidence="1">ND-AspRS</shortName>
    </alternativeName>
</protein>
<comment type="function">
    <text evidence="1">Aspartyl-tRNA synthetase with relaxed tRNA specificity since it is able to aspartylate not only its cognate tRNA(Asp) but also tRNA(Asn). Reaction proceeds in two steps: L-aspartate is first activated by ATP to form Asp-AMP and then transferred to the acceptor end of tRNA(Asp/Asn).</text>
</comment>
<comment type="catalytic activity">
    <reaction evidence="1">
        <text>tRNA(Asx) + L-aspartate + ATP = L-aspartyl-tRNA(Asx) + AMP + diphosphate</text>
        <dbReference type="Rhea" id="RHEA:18349"/>
        <dbReference type="Rhea" id="RHEA-COMP:9710"/>
        <dbReference type="Rhea" id="RHEA-COMP:9711"/>
        <dbReference type="ChEBI" id="CHEBI:29991"/>
        <dbReference type="ChEBI" id="CHEBI:30616"/>
        <dbReference type="ChEBI" id="CHEBI:33019"/>
        <dbReference type="ChEBI" id="CHEBI:78442"/>
        <dbReference type="ChEBI" id="CHEBI:78516"/>
        <dbReference type="ChEBI" id="CHEBI:456215"/>
        <dbReference type="EC" id="6.1.1.23"/>
    </reaction>
</comment>
<comment type="subunit">
    <text evidence="1">Homodimer.</text>
</comment>
<comment type="subcellular location">
    <subcellularLocation>
        <location evidence="1">Cytoplasm</location>
    </subcellularLocation>
</comment>
<comment type="similarity">
    <text evidence="1">Belongs to the class-II aminoacyl-tRNA synthetase family. Type 1 subfamily.</text>
</comment>
<dbReference type="EC" id="6.1.1.23" evidence="1"/>
<dbReference type="EMBL" id="CP000471">
    <property type="protein sequence ID" value="ABK43460.1"/>
    <property type="molecule type" value="Genomic_DNA"/>
</dbReference>
<dbReference type="RefSeq" id="WP_011712617.1">
    <property type="nucleotide sequence ID" value="NC_008576.1"/>
</dbReference>
<dbReference type="SMR" id="A0L667"/>
<dbReference type="STRING" id="156889.Mmc1_0942"/>
<dbReference type="KEGG" id="mgm:Mmc1_0942"/>
<dbReference type="eggNOG" id="COG0173">
    <property type="taxonomic scope" value="Bacteria"/>
</dbReference>
<dbReference type="HOGENOM" id="CLU_014330_3_2_5"/>
<dbReference type="OrthoDB" id="9802326at2"/>
<dbReference type="Proteomes" id="UP000002586">
    <property type="component" value="Chromosome"/>
</dbReference>
<dbReference type="GO" id="GO:0005737">
    <property type="term" value="C:cytoplasm"/>
    <property type="evidence" value="ECO:0007669"/>
    <property type="project" value="UniProtKB-SubCell"/>
</dbReference>
<dbReference type="GO" id="GO:0004815">
    <property type="term" value="F:aspartate-tRNA ligase activity"/>
    <property type="evidence" value="ECO:0007669"/>
    <property type="project" value="UniProtKB-UniRule"/>
</dbReference>
<dbReference type="GO" id="GO:0050560">
    <property type="term" value="F:aspartate-tRNA(Asn) ligase activity"/>
    <property type="evidence" value="ECO:0007669"/>
    <property type="project" value="UniProtKB-EC"/>
</dbReference>
<dbReference type="GO" id="GO:0005524">
    <property type="term" value="F:ATP binding"/>
    <property type="evidence" value="ECO:0007669"/>
    <property type="project" value="UniProtKB-UniRule"/>
</dbReference>
<dbReference type="GO" id="GO:0003676">
    <property type="term" value="F:nucleic acid binding"/>
    <property type="evidence" value="ECO:0007669"/>
    <property type="project" value="InterPro"/>
</dbReference>
<dbReference type="GO" id="GO:0006422">
    <property type="term" value="P:aspartyl-tRNA aminoacylation"/>
    <property type="evidence" value="ECO:0007669"/>
    <property type="project" value="UniProtKB-UniRule"/>
</dbReference>
<dbReference type="CDD" id="cd00777">
    <property type="entry name" value="AspRS_core"/>
    <property type="match status" value="1"/>
</dbReference>
<dbReference type="CDD" id="cd04317">
    <property type="entry name" value="EcAspRS_like_N"/>
    <property type="match status" value="1"/>
</dbReference>
<dbReference type="Gene3D" id="3.30.930.10">
    <property type="entry name" value="Bira Bifunctional Protein, Domain 2"/>
    <property type="match status" value="1"/>
</dbReference>
<dbReference type="Gene3D" id="3.30.1360.30">
    <property type="entry name" value="GAD-like domain"/>
    <property type="match status" value="1"/>
</dbReference>
<dbReference type="Gene3D" id="2.40.50.140">
    <property type="entry name" value="Nucleic acid-binding proteins"/>
    <property type="match status" value="1"/>
</dbReference>
<dbReference type="HAMAP" id="MF_00044">
    <property type="entry name" value="Asp_tRNA_synth_type1"/>
    <property type="match status" value="1"/>
</dbReference>
<dbReference type="InterPro" id="IPR004364">
    <property type="entry name" value="Aa-tRNA-synt_II"/>
</dbReference>
<dbReference type="InterPro" id="IPR006195">
    <property type="entry name" value="aa-tRNA-synth_II"/>
</dbReference>
<dbReference type="InterPro" id="IPR045864">
    <property type="entry name" value="aa-tRNA-synth_II/BPL/LPL"/>
</dbReference>
<dbReference type="InterPro" id="IPR004524">
    <property type="entry name" value="Asp-tRNA-ligase_1"/>
</dbReference>
<dbReference type="InterPro" id="IPR047089">
    <property type="entry name" value="Asp-tRNA-ligase_1_N"/>
</dbReference>
<dbReference type="InterPro" id="IPR002312">
    <property type="entry name" value="Asp/Asn-tRNA-synth_IIb"/>
</dbReference>
<dbReference type="InterPro" id="IPR047090">
    <property type="entry name" value="AspRS_core"/>
</dbReference>
<dbReference type="InterPro" id="IPR004115">
    <property type="entry name" value="GAD-like_sf"/>
</dbReference>
<dbReference type="InterPro" id="IPR029351">
    <property type="entry name" value="GAD_dom"/>
</dbReference>
<dbReference type="InterPro" id="IPR012340">
    <property type="entry name" value="NA-bd_OB-fold"/>
</dbReference>
<dbReference type="InterPro" id="IPR004365">
    <property type="entry name" value="NA-bd_OB_tRNA"/>
</dbReference>
<dbReference type="NCBIfam" id="TIGR00459">
    <property type="entry name" value="aspS_bact"/>
    <property type="match status" value="1"/>
</dbReference>
<dbReference type="NCBIfam" id="NF001750">
    <property type="entry name" value="PRK00476.1"/>
    <property type="match status" value="1"/>
</dbReference>
<dbReference type="PANTHER" id="PTHR22594:SF5">
    <property type="entry name" value="ASPARTATE--TRNA LIGASE, MITOCHONDRIAL"/>
    <property type="match status" value="1"/>
</dbReference>
<dbReference type="PANTHER" id="PTHR22594">
    <property type="entry name" value="ASPARTYL/LYSYL-TRNA SYNTHETASE"/>
    <property type="match status" value="1"/>
</dbReference>
<dbReference type="Pfam" id="PF02938">
    <property type="entry name" value="GAD"/>
    <property type="match status" value="1"/>
</dbReference>
<dbReference type="Pfam" id="PF00152">
    <property type="entry name" value="tRNA-synt_2"/>
    <property type="match status" value="1"/>
</dbReference>
<dbReference type="Pfam" id="PF01336">
    <property type="entry name" value="tRNA_anti-codon"/>
    <property type="match status" value="1"/>
</dbReference>
<dbReference type="PRINTS" id="PR01042">
    <property type="entry name" value="TRNASYNTHASP"/>
</dbReference>
<dbReference type="SUPFAM" id="SSF55681">
    <property type="entry name" value="Class II aaRS and biotin synthetases"/>
    <property type="match status" value="1"/>
</dbReference>
<dbReference type="SUPFAM" id="SSF55261">
    <property type="entry name" value="GAD domain-like"/>
    <property type="match status" value="1"/>
</dbReference>
<dbReference type="SUPFAM" id="SSF50249">
    <property type="entry name" value="Nucleic acid-binding proteins"/>
    <property type="match status" value="1"/>
</dbReference>
<dbReference type="PROSITE" id="PS50862">
    <property type="entry name" value="AA_TRNA_LIGASE_II"/>
    <property type="match status" value="1"/>
</dbReference>
<keyword id="KW-0030">Aminoacyl-tRNA synthetase</keyword>
<keyword id="KW-0067">ATP-binding</keyword>
<keyword id="KW-0963">Cytoplasm</keyword>
<keyword id="KW-0436">Ligase</keyword>
<keyword id="KW-0547">Nucleotide-binding</keyword>
<keyword id="KW-0648">Protein biosynthesis</keyword>
<keyword id="KW-1185">Reference proteome</keyword>
<proteinExistence type="inferred from homology"/>
<evidence type="ECO:0000255" key="1">
    <source>
        <dbReference type="HAMAP-Rule" id="MF_00044"/>
    </source>
</evidence>
<reference key="1">
    <citation type="journal article" date="2009" name="Appl. Environ. Microbiol.">
        <title>Complete genome sequence of the chemolithoautotrophic marine magnetotactic coccus strain MC-1.</title>
        <authorList>
            <person name="Schubbe S."/>
            <person name="Williams T.J."/>
            <person name="Xie G."/>
            <person name="Kiss H.E."/>
            <person name="Brettin T.S."/>
            <person name="Martinez D."/>
            <person name="Ross C.A."/>
            <person name="Schuler D."/>
            <person name="Cox B.L."/>
            <person name="Nealson K.H."/>
            <person name="Bazylinski D.A."/>
        </authorList>
    </citation>
    <scope>NUCLEOTIDE SEQUENCE [LARGE SCALE GENOMIC DNA]</scope>
    <source>
        <strain>ATCC BAA-1437 / JCM 17883 / MC-1</strain>
    </source>
</reference>
<name>SYDND_MAGMM</name>
<feature type="chain" id="PRO_1000006697" description="Aspartate--tRNA(Asp/Asn) ligase">
    <location>
        <begin position="1"/>
        <end position="607"/>
    </location>
</feature>
<feature type="region of interest" description="Aspartate" evidence="1">
    <location>
        <begin position="197"/>
        <end position="200"/>
    </location>
</feature>
<feature type="binding site" evidence="1">
    <location>
        <position position="173"/>
    </location>
    <ligand>
        <name>L-aspartate</name>
        <dbReference type="ChEBI" id="CHEBI:29991"/>
    </ligand>
</feature>
<feature type="binding site" evidence="1">
    <location>
        <begin position="219"/>
        <end position="221"/>
    </location>
    <ligand>
        <name>ATP</name>
        <dbReference type="ChEBI" id="CHEBI:30616"/>
    </ligand>
</feature>
<feature type="binding site" evidence="1">
    <location>
        <position position="219"/>
    </location>
    <ligand>
        <name>L-aspartate</name>
        <dbReference type="ChEBI" id="CHEBI:29991"/>
    </ligand>
</feature>
<feature type="binding site" evidence="1">
    <location>
        <position position="228"/>
    </location>
    <ligand>
        <name>ATP</name>
        <dbReference type="ChEBI" id="CHEBI:30616"/>
    </ligand>
</feature>
<feature type="binding site" evidence="1">
    <location>
        <position position="456"/>
    </location>
    <ligand>
        <name>L-aspartate</name>
        <dbReference type="ChEBI" id="CHEBI:29991"/>
    </ligand>
</feature>
<feature type="binding site" evidence="1">
    <location>
        <position position="498"/>
    </location>
    <ligand>
        <name>ATP</name>
        <dbReference type="ChEBI" id="CHEBI:30616"/>
    </ligand>
</feature>
<feature type="binding site" evidence="1">
    <location>
        <position position="505"/>
    </location>
    <ligand>
        <name>L-aspartate</name>
        <dbReference type="ChEBI" id="CHEBI:29991"/>
    </ligand>
</feature>
<feature type="binding site" evidence="1">
    <location>
        <begin position="550"/>
        <end position="553"/>
    </location>
    <ligand>
        <name>ATP</name>
        <dbReference type="ChEBI" id="CHEBI:30616"/>
    </ligand>
</feature>
<feature type="site" description="Important for tRNA non-discrimination" evidence="1">
    <location>
        <position position="31"/>
    </location>
</feature>
<feature type="site" description="Important for tRNA non-discrimination" evidence="1">
    <location>
        <position position="83"/>
    </location>
</feature>